<dbReference type="EC" id="2.7.7.8" evidence="1"/>
<dbReference type="EMBL" id="CP000024">
    <property type="protein sequence ID" value="AAV61697.1"/>
    <property type="molecule type" value="Genomic_DNA"/>
</dbReference>
<dbReference type="RefSeq" id="WP_011225302.1">
    <property type="nucleotide sequence ID" value="NC_006449.1"/>
</dbReference>
<dbReference type="SMR" id="Q5M1W9"/>
<dbReference type="GeneID" id="66898011"/>
<dbReference type="KEGG" id="stc:str0081"/>
<dbReference type="HOGENOM" id="CLU_004217_2_2_9"/>
<dbReference type="GO" id="GO:0005829">
    <property type="term" value="C:cytosol"/>
    <property type="evidence" value="ECO:0007669"/>
    <property type="project" value="TreeGrafter"/>
</dbReference>
<dbReference type="GO" id="GO:0000175">
    <property type="term" value="F:3'-5'-RNA exonuclease activity"/>
    <property type="evidence" value="ECO:0007669"/>
    <property type="project" value="TreeGrafter"/>
</dbReference>
<dbReference type="GO" id="GO:0000287">
    <property type="term" value="F:magnesium ion binding"/>
    <property type="evidence" value="ECO:0007669"/>
    <property type="project" value="UniProtKB-UniRule"/>
</dbReference>
<dbReference type="GO" id="GO:0004654">
    <property type="term" value="F:polyribonucleotide nucleotidyltransferase activity"/>
    <property type="evidence" value="ECO:0007669"/>
    <property type="project" value="UniProtKB-UniRule"/>
</dbReference>
<dbReference type="GO" id="GO:0003723">
    <property type="term" value="F:RNA binding"/>
    <property type="evidence" value="ECO:0007669"/>
    <property type="project" value="UniProtKB-UniRule"/>
</dbReference>
<dbReference type="GO" id="GO:0006402">
    <property type="term" value="P:mRNA catabolic process"/>
    <property type="evidence" value="ECO:0007669"/>
    <property type="project" value="UniProtKB-UniRule"/>
</dbReference>
<dbReference type="GO" id="GO:0006396">
    <property type="term" value="P:RNA processing"/>
    <property type="evidence" value="ECO:0007669"/>
    <property type="project" value="InterPro"/>
</dbReference>
<dbReference type="CDD" id="cd02393">
    <property type="entry name" value="KH-I_PNPase"/>
    <property type="match status" value="1"/>
</dbReference>
<dbReference type="CDD" id="cd11363">
    <property type="entry name" value="RNase_PH_PNPase_1"/>
    <property type="match status" value="1"/>
</dbReference>
<dbReference type="CDD" id="cd11364">
    <property type="entry name" value="RNase_PH_PNPase_2"/>
    <property type="match status" value="1"/>
</dbReference>
<dbReference type="FunFam" id="3.30.1370.10:FF:000001">
    <property type="entry name" value="Polyribonucleotide nucleotidyltransferase"/>
    <property type="match status" value="1"/>
</dbReference>
<dbReference type="FunFam" id="3.30.230.70:FF:000001">
    <property type="entry name" value="Polyribonucleotide nucleotidyltransferase"/>
    <property type="match status" value="1"/>
</dbReference>
<dbReference type="FunFam" id="3.30.230.70:FF:000002">
    <property type="entry name" value="Polyribonucleotide nucleotidyltransferase"/>
    <property type="match status" value="1"/>
</dbReference>
<dbReference type="Gene3D" id="3.30.230.70">
    <property type="entry name" value="GHMP Kinase, N-terminal domain"/>
    <property type="match status" value="2"/>
</dbReference>
<dbReference type="Gene3D" id="3.30.1370.10">
    <property type="entry name" value="K Homology domain, type 1"/>
    <property type="match status" value="1"/>
</dbReference>
<dbReference type="Gene3D" id="2.40.50.140">
    <property type="entry name" value="Nucleic acid-binding proteins"/>
    <property type="match status" value="1"/>
</dbReference>
<dbReference type="HAMAP" id="MF_01595">
    <property type="entry name" value="PNPase"/>
    <property type="match status" value="1"/>
</dbReference>
<dbReference type="InterPro" id="IPR001247">
    <property type="entry name" value="ExoRNase_PH_dom1"/>
</dbReference>
<dbReference type="InterPro" id="IPR015847">
    <property type="entry name" value="ExoRNase_PH_dom2"/>
</dbReference>
<dbReference type="InterPro" id="IPR036345">
    <property type="entry name" value="ExoRNase_PH_dom2_sf"/>
</dbReference>
<dbReference type="InterPro" id="IPR004087">
    <property type="entry name" value="KH_dom"/>
</dbReference>
<dbReference type="InterPro" id="IPR004088">
    <property type="entry name" value="KH_dom_type_1"/>
</dbReference>
<dbReference type="InterPro" id="IPR036612">
    <property type="entry name" value="KH_dom_type_1_sf"/>
</dbReference>
<dbReference type="InterPro" id="IPR012340">
    <property type="entry name" value="NA-bd_OB-fold"/>
</dbReference>
<dbReference type="InterPro" id="IPR012162">
    <property type="entry name" value="PNPase"/>
</dbReference>
<dbReference type="InterPro" id="IPR027408">
    <property type="entry name" value="PNPase/RNase_PH_dom_sf"/>
</dbReference>
<dbReference type="InterPro" id="IPR015848">
    <property type="entry name" value="PNPase_PH_RNA-bd_bac/org-type"/>
</dbReference>
<dbReference type="InterPro" id="IPR036456">
    <property type="entry name" value="PNPase_PH_RNA-bd_sf"/>
</dbReference>
<dbReference type="InterPro" id="IPR020568">
    <property type="entry name" value="Ribosomal_Su5_D2-typ_SF"/>
</dbReference>
<dbReference type="InterPro" id="IPR003029">
    <property type="entry name" value="S1_domain"/>
</dbReference>
<dbReference type="NCBIfam" id="TIGR03591">
    <property type="entry name" value="polynuc_phos"/>
    <property type="match status" value="1"/>
</dbReference>
<dbReference type="NCBIfam" id="NF008805">
    <property type="entry name" value="PRK11824.1"/>
    <property type="match status" value="1"/>
</dbReference>
<dbReference type="PANTHER" id="PTHR11252">
    <property type="entry name" value="POLYRIBONUCLEOTIDE NUCLEOTIDYLTRANSFERASE"/>
    <property type="match status" value="1"/>
</dbReference>
<dbReference type="PANTHER" id="PTHR11252:SF0">
    <property type="entry name" value="POLYRIBONUCLEOTIDE NUCLEOTIDYLTRANSFERASE 1, MITOCHONDRIAL"/>
    <property type="match status" value="1"/>
</dbReference>
<dbReference type="Pfam" id="PF00013">
    <property type="entry name" value="KH_1"/>
    <property type="match status" value="1"/>
</dbReference>
<dbReference type="Pfam" id="PF03726">
    <property type="entry name" value="PNPase"/>
    <property type="match status" value="1"/>
</dbReference>
<dbReference type="Pfam" id="PF01138">
    <property type="entry name" value="RNase_PH"/>
    <property type="match status" value="2"/>
</dbReference>
<dbReference type="Pfam" id="PF03725">
    <property type="entry name" value="RNase_PH_C"/>
    <property type="match status" value="2"/>
</dbReference>
<dbReference type="Pfam" id="PF00575">
    <property type="entry name" value="S1"/>
    <property type="match status" value="1"/>
</dbReference>
<dbReference type="PIRSF" id="PIRSF005499">
    <property type="entry name" value="PNPase"/>
    <property type="match status" value="1"/>
</dbReference>
<dbReference type="SMART" id="SM00322">
    <property type="entry name" value="KH"/>
    <property type="match status" value="1"/>
</dbReference>
<dbReference type="SMART" id="SM00316">
    <property type="entry name" value="S1"/>
    <property type="match status" value="1"/>
</dbReference>
<dbReference type="SUPFAM" id="SSF54791">
    <property type="entry name" value="Eukaryotic type KH-domain (KH-domain type I)"/>
    <property type="match status" value="1"/>
</dbReference>
<dbReference type="SUPFAM" id="SSF50249">
    <property type="entry name" value="Nucleic acid-binding proteins"/>
    <property type="match status" value="1"/>
</dbReference>
<dbReference type="SUPFAM" id="SSF46915">
    <property type="entry name" value="Polynucleotide phosphorylase/guanosine pentaphosphate synthase (PNPase/GPSI), domain 3"/>
    <property type="match status" value="1"/>
</dbReference>
<dbReference type="SUPFAM" id="SSF55666">
    <property type="entry name" value="Ribonuclease PH domain 2-like"/>
    <property type="match status" value="2"/>
</dbReference>
<dbReference type="SUPFAM" id="SSF54211">
    <property type="entry name" value="Ribosomal protein S5 domain 2-like"/>
    <property type="match status" value="2"/>
</dbReference>
<dbReference type="PROSITE" id="PS50084">
    <property type="entry name" value="KH_TYPE_1"/>
    <property type="match status" value="1"/>
</dbReference>
<dbReference type="PROSITE" id="PS50126">
    <property type="entry name" value="S1"/>
    <property type="match status" value="1"/>
</dbReference>
<proteinExistence type="inferred from homology"/>
<accession>Q5M1W9</accession>
<feature type="chain" id="PRO_0000329886" description="Polyribonucleotide nucleotidyltransferase">
    <location>
        <begin position="1"/>
        <end position="741"/>
    </location>
</feature>
<feature type="domain" description="KH" evidence="1">
    <location>
        <begin position="556"/>
        <end position="615"/>
    </location>
</feature>
<feature type="domain" description="S1 motif" evidence="1">
    <location>
        <begin position="625"/>
        <end position="693"/>
    </location>
</feature>
<feature type="region of interest" description="Disordered" evidence="2">
    <location>
        <begin position="695"/>
        <end position="741"/>
    </location>
</feature>
<feature type="compositionally biased region" description="Basic and acidic residues" evidence="2">
    <location>
        <begin position="698"/>
        <end position="713"/>
    </location>
</feature>
<feature type="compositionally biased region" description="Basic and acidic residues" evidence="2">
    <location>
        <begin position="723"/>
        <end position="741"/>
    </location>
</feature>
<feature type="binding site" evidence="1">
    <location>
        <position position="489"/>
    </location>
    <ligand>
        <name>Mg(2+)</name>
        <dbReference type="ChEBI" id="CHEBI:18420"/>
    </ligand>
</feature>
<feature type="binding site" evidence="1">
    <location>
        <position position="495"/>
    </location>
    <ligand>
        <name>Mg(2+)</name>
        <dbReference type="ChEBI" id="CHEBI:18420"/>
    </ligand>
</feature>
<keyword id="KW-0963">Cytoplasm</keyword>
<keyword id="KW-0460">Magnesium</keyword>
<keyword id="KW-0479">Metal-binding</keyword>
<keyword id="KW-0548">Nucleotidyltransferase</keyword>
<keyword id="KW-0694">RNA-binding</keyword>
<keyword id="KW-0808">Transferase</keyword>
<name>PNP_STRT1</name>
<reference key="1">
    <citation type="journal article" date="2004" name="Nat. Biotechnol.">
        <title>Complete sequence and comparative genome analysis of the dairy bacterium Streptococcus thermophilus.</title>
        <authorList>
            <person name="Bolotin A."/>
            <person name="Quinquis B."/>
            <person name="Renault P."/>
            <person name="Sorokin A."/>
            <person name="Ehrlich S.D."/>
            <person name="Kulakauskas S."/>
            <person name="Lapidus A."/>
            <person name="Goltsman E."/>
            <person name="Mazur M."/>
            <person name="Pusch G.D."/>
            <person name="Fonstein M."/>
            <person name="Overbeek R."/>
            <person name="Kyprides N."/>
            <person name="Purnelle B."/>
            <person name="Prozzi D."/>
            <person name="Ngui K."/>
            <person name="Masuy D."/>
            <person name="Hancy F."/>
            <person name="Burteau S."/>
            <person name="Boutry M."/>
            <person name="Delcour J."/>
            <person name="Goffeau A."/>
            <person name="Hols P."/>
        </authorList>
    </citation>
    <scope>NUCLEOTIDE SEQUENCE [LARGE SCALE GENOMIC DNA]</scope>
    <source>
        <strain>CNRZ 1066</strain>
    </source>
</reference>
<protein>
    <recommendedName>
        <fullName evidence="1">Polyribonucleotide nucleotidyltransferase</fullName>
        <ecNumber evidence="1">2.7.7.8</ecNumber>
    </recommendedName>
    <alternativeName>
        <fullName evidence="1">Polynucleotide phosphorylase</fullName>
        <shortName evidence="1">PNPase</shortName>
    </alternativeName>
</protein>
<evidence type="ECO:0000255" key="1">
    <source>
        <dbReference type="HAMAP-Rule" id="MF_01595"/>
    </source>
</evidence>
<evidence type="ECO:0000256" key="2">
    <source>
        <dbReference type="SAM" id="MobiDB-lite"/>
    </source>
</evidence>
<sequence length="741" mass="80999">MAKQTFEMTFEGRPLVVEVGQVAKQANGAVVVRYGDTTVLSVAVMSKKMATANFFPLQVNYEEKMYAAGKFPGGFSKREGRPSTDATLTARLIDRPIRPMFAEGFRNEVQVINTVLSYDENASAPMAAMFGSSLALSISDIPFNGPIAGVQVAYAAEDFIINPSASDKEVSHLDLIVAGTKEAINMVEAGAQELSEDIMLQALLKGHEAIQELVDFQNYIVAAVGKEKAEVELFQVDADLKAEIEAVYYDQLAKAVQVEEKLAREAATKAVKEEVLASYQERFAEDEDKETILRDVVEILEQMEHAEVRRLITEDKIRPDGRRVDEIRPLDAEIDFLPNVHGSGLFTRGQTQALSVLTLAPMSDTQLVDGLDPEYKKRFLHHYNFPQYSVGETGRYGAPGRREIGHGALGERALAQVLPSVEEFPYAIRLVAEVLESNGSSSQASICAGTLALMAGGVPIKAPVAGIAMGLISDGTNYTVLTDIQGLEDHFGDMDFKVAGTRLGITALQMDIKISGITPAILEEALAQAKVARFEILDVIESAIAEPRSELAPTAPKIDSIQIPVDKIKVVIGKGGETIDKIIAETGVTIDIDEEGLVQIFSSDQDAIDRAKTIISDLVREAKVGEVYTVPVVRIEKFGAFVHLFNKTDALVHISELAWKHTEHVEDVVKVGDMVTVKIIKIDEKGRVDASIKTLLPKPEKNEDGENGEEHRHCCCSHHKPDHHNESVEAPKKSDESETKE</sequence>
<comment type="function">
    <text evidence="1">Involved in mRNA degradation. Catalyzes the phosphorolysis of single-stranded polyribonucleotides processively in the 3'- to 5'-direction.</text>
</comment>
<comment type="catalytic activity">
    <reaction evidence="1">
        <text>RNA(n+1) + phosphate = RNA(n) + a ribonucleoside 5'-diphosphate</text>
        <dbReference type="Rhea" id="RHEA:22096"/>
        <dbReference type="Rhea" id="RHEA-COMP:14527"/>
        <dbReference type="Rhea" id="RHEA-COMP:17342"/>
        <dbReference type="ChEBI" id="CHEBI:43474"/>
        <dbReference type="ChEBI" id="CHEBI:57930"/>
        <dbReference type="ChEBI" id="CHEBI:140395"/>
        <dbReference type="EC" id="2.7.7.8"/>
    </reaction>
</comment>
<comment type="cofactor">
    <cofactor evidence="1">
        <name>Mg(2+)</name>
        <dbReference type="ChEBI" id="CHEBI:18420"/>
    </cofactor>
</comment>
<comment type="subcellular location">
    <subcellularLocation>
        <location evidence="1">Cytoplasm</location>
    </subcellularLocation>
</comment>
<comment type="similarity">
    <text evidence="1">Belongs to the polyribonucleotide nucleotidyltransferase family.</text>
</comment>
<organism>
    <name type="scientific">Streptococcus thermophilus (strain CNRZ 1066)</name>
    <dbReference type="NCBI Taxonomy" id="299768"/>
    <lineage>
        <taxon>Bacteria</taxon>
        <taxon>Bacillati</taxon>
        <taxon>Bacillota</taxon>
        <taxon>Bacilli</taxon>
        <taxon>Lactobacillales</taxon>
        <taxon>Streptococcaceae</taxon>
        <taxon>Streptococcus</taxon>
    </lineage>
</organism>
<gene>
    <name evidence="1" type="primary">pnp</name>
    <name type="ordered locus">str0081</name>
</gene>